<sequence length="621" mass="71996">MLLLPSAADGRGTAITHALTSASTLCQVEPVGRWFEAFVKRRNRNASASFQELEDKKELSEESEDEELQLEEFPMLKTLDPKDWKNQDHYAVLGLGHVRYKATQRQIKAAHKAMVLKHHPDKRKAAGEPIKEGDNDYFTCITKAYEMLSDPVKRRAFNSVDPTFDNSVPSKSEAKDNFFEVFTPVFERNSRWSNKKNVPKLGDMNSSFEDVDIFYSFWYNFDSWREFSYLDEEEKEKAECRDERRWIEKQNRATRAQRKKEEMNRIRTLVDNAYSCDPRIKKFKEEEKAKKEAEKKAKAEAKRKEQEAKEKQRQAELEAARLAKEKEEEEVRQQALLAKKEKDIQKKAIKKERQKLRNSCKTWNHFSDNEAERVKMMEEVEKLCDRLELASLQCLNETLTSCTKEVGKAALEKQIEEINEQIRKEKEEAEARMRQASKNTEKSTGGGGNGSKNWSEDDLQLLIKAVNLFPAGTNSRWEVIANYMNIHSSSGVKRTAKDVIGKAKSLQKLDPHQKDDINKKAFDKFKKEHGVVPQADNATPSERFEGPYTDFTPWTTEEQKLLEQALKTYPVNTPERWEKIAEAVPGRTKKDCMKRYKELVEMVKAKKAAQEQVLNASRAKK</sequence>
<feature type="chain" id="PRO_0000425752" description="DnaJ homolog subfamily C member 2">
    <location>
        <begin position="1"/>
        <end position="621"/>
    </location>
</feature>
<feature type="initiator methionine" description="Removed; alternate" evidence="13">
    <location>
        <position position="1"/>
    </location>
</feature>
<feature type="chain" id="PRO_0000071123" description="DnaJ homolog subfamily C member 2, N-terminally processed">
    <location>
        <begin position="2"/>
        <end position="621"/>
    </location>
</feature>
<feature type="domain" description="J" evidence="2">
    <location>
        <begin position="88"/>
        <end position="161"/>
    </location>
</feature>
<feature type="domain" description="SANT 1" evidence="3">
    <location>
        <begin position="449"/>
        <end position="511"/>
    </location>
</feature>
<feature type="domain" description="SANT 2" evidence="3">
    <location>
        <begin position="549"/>
        <end position="604"/>
    </location>
</feature>
<feature type="region of interest" description="Epitope (recognized by CD8(+) cytotoxic T-lymphocytes)">
    <location>
        <begin position="23"/>
        <end position="31"/>
    </location>
</feature>
<feature type="region of interest" description="ZRF1-UBD">
    <location>
        <begin position="160"/>
        <end position="250"/>
    </location>
</feature>
<feature type="region of interest" description="Disordered" evidence="4">
    <location>
        <begin position="294"/>
        <end position="315"/>
    </location>
</feature>
<feature type="region of interest" description="Disordered" evidence="4">
    <location>
        <begin position="426"/>
        <end position="453"/>
    </location>
</feature>
<feature type="modified residue" description="N-acetylmethionine" evidence="20">
    <location>
        <position position="1"/>
    </location>
</feature>
<feature type="modified residue" description="Phosphoserine" evidence="16 17 18 19 21">
    <location>
        <position position="47"/>
    </location>
</feature>
<feature type="modified residue" description="Phosphoserine" evidence="16 18 19 21">
    <location>
        <position position="49"/>
    </location>
</feature>
<feature type="modified residue" description="Phosphoserine" evidence="16">
    <location>
        <position position="60"/>
    </location>
</feature>
<feature type="modified residue" description="Phosphoserine" evidence="16">
    <location>
        <position position="63"/>
    </location>
</feature>
<feature type="splice variant" id="VSP_023562" description="In isoform 2." evidence="14">
    <location>
        <begin position="362"/>
        <end position="414"/>
    </location>
</feature>
<feature type="mutagenesis site" description="Loss of function." evidence="8">
    <original>HQ</original>
    <variation>AA</variation>
    <location>
        <begin position="512"/>
        <end position="513"/>
    </location>
</feature>
<feature type="sequence conflict" description="In Ref. 1; CAA66913." evidence="15" ref="1">
    <original>R</original>
    <variation>G</variation>
    <location>
        <position position="252"/>
    </location>
</feature>
<feature type="sequence conflict" description="In Ref. 1; CAA66913." evidence="15" ref="1">
    <original>G</original>
    <variation>R</variation>
    <location>
        <position position="472"/>
    </location>
</feature>
<feature type="sequence conflict" description="In Ref. 4; AAI39752." evidence="15" ref="4">
    <original>E</original>
    <variation>K</variation>
    <location>
        <position position="578"/>
    </location>
</feature>
<feature type="helix" evidence="23">
    <location>
        <begin position="348"/>
        <end position="362"/>
    </location>
</feature>
<feature type="turn" evidence="23">
    <location>
        <begin position="363"/>
        <end position="365"/>
    </location>
</feature>
<feature type="helix" evidence="23">
    <location>
        <begin position="370"/>
        <end position="386"/>
    </location>
</feature>
<feature type="helix" evidence="23">
    <location>
        <begin position="389"/>
        <end position="399"/>
    </location>
</feature>
<feature type="helix" evidence="23">
    <location>
        <begin position="404"/>
        <end position="431"/>
    </location>
</feature>
<feature type="helix" evidence="22">
    <location>
        <begin position="556"/>
        <end position="568"/>
    </location>
</feature>
<feature type="helix" evidence="22">
    <location>
        <begin position="576"/>
        <end position="583"/>
    </location>
</feature>
<feature type="helix" evidence="22">
    <location>
        <begin position="589"/>
        <end position="618"/>
    </location>
</feature>
<evidence type="ECO:0000250" key="1">
    <source>
        <dbReference type="UniProtKB" id="P54103"/>
    </source>
</evidence>
<evidence type="ECO:0000255" key="2">
    <source>
        <dbReference type="PROSITE-ProRule" id="PRU00286"/>
    </source>
</evidence>
<evidence type="ECO:0000255" key="3">
    <source>
        <dbReference type="PROSITE-ProRule" id="PRU00624"/>
    </source>
</evidence>
<evidence type="ECO:0000256" key="4">
    <source>
        <dbReference type="SAM" id="MobiDB-lite"/>
    </source>
</evidence>
<evidence type="ECO:0000269" key="5">
    <source>
    </source>
</evidence>
<evidence type="ECO:0000269" key="6">
    <source>
    </source>
</evidence>
<evidence type="ECO:0000269" key="7">
    <source>
    </source>
</evidence>
<evidence type="ECO:0000269" key="8">
    <source>
    </source>
</evidence>
<evidence type="ECO:0000269" key="9">
    <source>
    </source>
</evidence>
<evidence type="ECO:0000269" key="10">
    <source>
    </source>
</evidence>
<evidence type="ECO:0000269" key="11">
    <source>
    </source>
</evidence>
<evidence type="ECO:0000269" key="12">
    <source>
    </source>
</evidence>
<evidence type="ECO:0000269" key="13">
    <source ref="3"/>
</evidence>
<evidence type="ECO:0000303" key="14">
    <source>
    </source>
</evidence>
<evidence type="ECO:0000305" key="15"/>
<evidence type="ECO:0007744" key="16">
    <source>
    </source>
</evidence>
<evidence type="ECO:0007744" key="17">
    <source>
    </source>
</evidence>
<evidence type="ECO:0007744" key="18">
    <source>
    </source>
</evidence>
<evidence type="ECO:0007744" key="19">
    <source>
    </source>
</evidence>
<evidence type="ECO:0007744" key="20">
    <source>
    </source>
</evidence>
<evidence type="ECO:0007744" key="21">
    <source>
    </source>
</evidence>
<evidence type="ECO:0007829" key="22">
    <source>
        <dbReference type="PDB" id="2M2E"/>
    </source>
</evidence>
<evidence type="ECO:0007829" key="23">
    <source>
        <dbReference type="PDB" id="6CGH"/>
    </source>
</evidence>
<gene>
    <name type="primary">DNAJC2</name>
    <name type="synonym">MPHOSPH11</name>
    <name type="synonym">MPP11</name>
    <name type="synonym">ZRF1</name>
</gene>
<proteinExistence type="evidence at protein level"/>
<protein>
    <recommendedName>
        <fullName>DnaJ homolog subfamily C member 2</fullName>
    </recommendedName>
    <alternativeName>
        <fullName>M-phase phosphoprotein 11</fullName>
    </alternativeName>
    <alternativeName>
        <fullName>Zuotin-related factor 1</fullName>
    </alternativeName>
    <component>
        <recommendedName>
            <fullName>DnaJ homolog subfamily C member 2, N-terminally processed</fullName>
        </recommendedName>
    </component>
</protein>
<keyword id="KW-0002">3D-structure</keyword>
<keyword id="KW-0007">Acetylation</keyword>
<keyword id="KW-0010">Activator</keyword>
<keyword id="KW-0025">Alternative splicing</keyword>
<keyword id="KW-0143">Chaperone</keyword>
<keyword id="KW-0156">Chromatin regulator</keyword>
<keyword id="KW-0963">Cytoplasm</keyword>
<keyword id="KW-0903">Direct protein sequencing</keyword>
<keyword id="KW-0539">Nucleus</keyword>
<keyword id="KW-0597">Phosphoprotein</keyword>
<keyword id="KW-1267">Proteomics identification</keyword>
<keyword id="KW-1185">Reference proteome</keyword>
<keyword id="KW-0677">Repeat</keyword>
<keyword id="KW-0804">Transcription</keyword>
<keyword id="KW-0805">Transcription regulation</keyword>
<accession>Q99543</accession>
<accession>A4VCI0</accession>
<accession>Q9BVX1</accession>
<reference key="1">
    <citation type="journal article" date="1996" name="Mol. Biol. Cell">
        <title>Identification of novel M phase phosphoproteins by expression cloning.</title>
        <authorList>
            <person name="Matsumoto-Taniura N."/>
            <person name="Pirollet F."/>
            <person name="Monroe R."/>
            <person name="Gerace L."/>
            <person name="Westendorf J.M."/>
        </authorList>
    </citation>
    <scope>NUCLEOTIDE SEQUENCE [MRNA] (ISOFORM 2)</scope>
    <scope>PHOSPHORYLATION</scope>
    <source>
        <tissue>Blood</tissue>
    </source>
</reference>
<reference key="2">
    <citation type="journal article" date="2003" name="Nature">
        <title>The DNA sequence of human chromosome 7.</title>
        <authorList>
            <person name="Hillier L.W."/>
            <person name="Fulton R.S."/>
            <person name="Fulton L.A."/>
            <person name="Graves T.A."/>
            <person name="Pepin K.H."/>
            <person name="Wagner-McPherson C."/>
            <person name="Layman D."/>
            <person name="Maas J."/>
            <person name="Jaeger S."/>
            <person name="Walker R."/>
            <person name="Wylie K."/>
            <person name="Sekhon M."/>
            <person name="Becker M.C."/>
            <person name="O'Laughlin M.D."/>
            <person name="Schaller M.E."/>
            <person name="Fewell G.A."/>
            <person name="Delehaunty K.D."/>
            <person name="Miner T.L."/>
            <person name="Nash W.E."/>
            <person name="Cordes M."/>
            <person name="Du H."/>
            <person name="Sun H."/>
            <person name="Edwards J."/>
            <person name="Bradshaw-Cordum H."/>
            <person name="Ali J."/>
            <person name="Andrews S."/>
            <person name="Isak A."/>
            <person name="Vanbrunt A."/>
            <person name="Nguyen C."/>
            <person name="Du F."/>
            <person name="Lamar B."/>
            <person name="Courtney L."/>
            <person name="Kalicki J."/>
            <person name="Ozersky P."/>
            <person name="Bielicki L."/>
            <person name="Scott K."/>
            <person name="Holmes A."/>
            <person name="Harkins R."/>
            <person name="Harris A."/>
            <person name="Strong C.M."/>
            <person name="Hou S."/>
            <person name="Tomlinson C."/>
            <person name="Dauphin-Kohlberg S."/>
            <person name="Kozlowicz-Reilly A."/>
            <person name="Leonard S."/>
            <person name="Rohlfing T."/>
            <person name="Rock S.M."/>
            <person name="Tin-Wollam A.-M."/>
            <person name="Abbott A."/>
            <person name="Minx P."/>
            <person name="Maupin R."/>
            <person name="Strowmatt C."/>
            <person name="Latreille P."/>
            <person name="Miller N."/>
            <person name="Johnson D."/>
            <person name="Murray J."/>
            <person name="Woessner J.P."/>
            <person name="Wendl M.C."/>
            <person name="Yang S.-P."/>
            <person name="Schultz B.R."/>
            <person name="Wallis J.W."/>
            <person name="Spieth J."/>
            <person name="Bieri T.A."/>
            <person name="Nelson J.O."/>
            <person name="Berkowicz N."/>
            <person name="Wohldmann P.E."/>
            <person name="Cook L.L."/>
            <person name="Hickenbotham M.T."/>
            <person name="Eldred J."/>
            <person name="Williams D."/>
            <person name="Bedell J.A."/>
            <person name="Mardis E.R."/>
            <person name="Clifton S.W."/>
            <person name="Chissoe S.L."/>
            <person name="Marra M.A."/>
            <person name="Raymond C."/>
            <person name="Haugen E."/>
            <person name="Gillett W."/>
            <person name="Zhou Y."/>
            <person name="James R."/>
            <person name="Phelps K."/>
            <person name="Iadanoto S."/>
            <person name="Bubb K."/>
            <person name="Simms E."/>
            <person name="Levy R."/>
            <person name="Clendenning J."/>
            <person name="Kaul R."/>
            <person name="Kent W.J."/>
            <person name="Furey T.S."/>
            <person name="Baertsch R.A."/>
            <person name="Brent M.R."/>
            <person name="Keibler E."/>
            <person name="Flicek P."/>
            <person name="Bork P."/>
            <person name="Suyama M."/>
            <person name="Bailey J.A."/>
            <person name="Portnoy M.E."/>
            <person name="Torrents D."/>
            <person name="Chinwalla A.T."/>
            <person name="Gish W.R."/>
            <person name="Eddy S.R."/>
            <person name="McPherson J.D."/>
            <person name="Olson M.V."/>
            <person name="Eichler E.E."/>
            <person name="Green E.D."/>
            <person name="Waterston R.H."/>
            <person name="Wilson R.K."/>
        </authorList>
    </citation>
    <scope>NUCLEOTIDE SEQUENCE [LARGE SCALE GENOMIC DNA]</scope>
</reference>
<reference key="3">
    <citation type="submission" date="2008-03" db="UniProtKB">
        <authorList>
            <person name="Bienvenut W.V."/>
            <person name="Glen H."/>
            <person name="Frame M.C."/>
        </authorList>
    </citation>
    <scope>PROTEIN SEQUENCE OF 2-11</scope>
    <scope>CLEAVAGE OF INITIATOR METHIONINE</scope>
    <scope>IDENTIFICATION BY MASS SPECTROMETRY</scope>
    <source>
        <tissue>Osteosarcoma</tissue>
    </source>
</reference>
<reference key="4">
    <citation type="journal article" date="2004" name="Genome Res.">
        <title>The status, quality, and expansion of the NIH full-length cDNA project: the Mammalian Gene Collection (MGC).</title>
        <authorList>
            <consortium name="The MGC Project Team"/>
        </authorList>
    </citation>
    <scope>NUCLEOTIDE SEQUENCE [LARGE SCALE MRNA] OF 7-621 (ISOFORM 1)</scope>
    <source>
        <tissue>Cervix</tissue>
    </source>
</reference>
<reference key="5">
    <citation type="journal article" date="2000" name="Cancer Res.">
        <title>A putative oncogenic role for MPP11 in head and neck squamous cell cancer.</title>
        <authorList>
            <person name="Resto V.A."/>
            <person name="Caballero O.L."/>
            <person name="Buta M.R."/>
            <person name="Westra W.H."/>
            <person name="Wu L."/>
            <person name="Westendorf J.M."/>
            <person name="Jen J."/>
            <person name="Hieter P."/>
            <person name="Sidransky D."/>
        </authorList>
    </citation>
    <scope>TISSUE SPECIFICITY</scope>
</reference>
<reference key="6">
    <citation type="journal article" date="2003" name="Int. J. Cancer">
        <title>Characterization of several leukemia-associated antigens inducing humoral immune responses in acute and chronic myeloid leukemia.</title>
        <authorList>
            <person name="Greiner J."/>
            <person name="Ringhoffer M."/>
            <person name="Taniguchi M."/>
            <person name="Hauser T."/>
            <person name="Schmitt A."/>
            <person name="Dohner H."/>
            <person name="Schmitt M."/>
        </authorList>
    </citation>
    <scope>INDUCTION IN LEUKEMIA</scope>
</reference>
<reference key="7">
    <citation type="journal article" date="2004" name="Int. J. Cancer">
        <title>mRNA expression of leukemia-associated antigens in patients with acute myeloid leukemia for the development of specific immunotherapies.</title>
        <authorList>
            <person name="Greiner J."/>
            <person name="Ringhoffer M."/>
            <person name="Taniguchi M."/>
            <person name="Li L."/>
            <person name="Schmitt A."/>
            <person name="Shiku H."/>
            <person name="Dohner H."/>
            <person name="Schmitt M."/>
        </authorList>
    </citation>
    <scope>INDUCTION IN LEUKEMIA</scope>
</reference>
<reference key="8">
    <citation type="journal article" date="2005" name="Proc. Natl. Acad. Sci. U.S.A.">
        <title>The chaperones MPP11 and Hsp70L1 form the mammalian ribosome-associated complex.</title>
        <authorList>
            <person name="Otto H."/>
            <person name="Conz C."/>
            <person name="Maier P."/>
            <person name="Wolfle T."/>
            <person name="Suzuki C.K."/>
            <person name="Jeno P."/>
            <person name="Rucknagel P."/>
            <person name="Stahl J."/>
            <person name="Rospert S."/>
        </authorList>
    </citation>
    <scope>FUNCTION</scope>
    <scope>SUBCELLULAR LOCATION</scope>
    <scope>IDENTIFICATION IN THE RAC COMPLEX</scope>
    <scope>INTERACTION WITH HSPA14</scope>
</reference>
<reference key="9">
    <citation type="journal article" date="2005" name="Science">
        <title>Human Mpp11 J protein: ribosome-tethered molecular chaperones are ubiquitous.</title>
        <authorList>
            <person name="Hundley H.A."/>
            <person name="Walter W."/>
            <person name="Bairstow S."/>
            <person name="Craig E.A."/>
        </authorList>
    </citation>
    <scope>FUNCTION</scope>
    <scope>MUTAGENESIS OF 512-HIS-GLN-513</scope>
</reference>
<reference key="10">
    <citation type="journal article" date="2006" name="Cell">
        <title>Global, in vivo, and site-specific phosphorylation dynamics in signaling networks.</title>
        <authorList>
            <person name="Olsen J.V."/>
            <person name="Blagoev B."/>
            <person name="Gnad F."/>
            <person name="Macek B."/>
            <person name="Kumar C."/>
            <person name="Mortensen P."/>
            <person name="Mann M."/>
        </authorList>
    </citation>
    <scope>PHOSPHORYLATION [LARGE SCALE ANALYSIS] AT SER-47; SER-49; SER-60 AND SER-63</scope>
    <scope>IDENTIFICATION BY MASS SPECTROMETRY [LARGE SCALE ANALYSIS]</scope>
    <source>
        <tissue>Cervix carcinoma</tissue>
    </source>
</reference>
<reference key="11">
    <citation type="journal article" date="2007" name="Cell Res.">
        <title>C/EBPalphap30 plays transcriptional regulatory roles distinct from C/EBPalphap42.</title>
        <authorList>
            <person name="Wang C."/>
            <person name="Chen X."/>
            <person name="Wang Y."/>
            <person name="Gong J."/>
            <person name="Hu G."/>
        </authorList>
    </citation>
    <scope>INDUCTION</scope>
</reference>
<reference key="12">
    <citation type="journal article" date="2008" name="Proc. Natl. Acad. Sci. U.S.A.">
        <title>A quantitative atlas of mitotic phosphorylation.</title>
        <authorList>
            <person name="Dephoure N."/>
            <person name="Zhou C."/>
            <person name="Villen J."/>
            <person name="Beausoleil S.A."/>
            <person name="Bakalarski C.E."/>
            <person name="Elledge S.J."/>
            <person name="Gygi S.P."/>
        </authorList>
    </citation>
    <scope>IDENTIFICATION BY MASS SPECTROMETRY [LARGE SCALE ANALYSIS]</scope>
    <source>
        <tissue>Cervix carcinoma</tissue>
    </source>
</reference>
<reference key="13">
    <citation type="journal article" date="2009" name="Sci. Signal.">
        <title>Quantitative phosphoproteomic analysis of T cell receptor signaling reveals system-wide modulation of protein-protein interactions.</title>
        <authorList>
            <person name="Mayya V."/>
            <person name="Lundgren D.H."/>
            <person name="Hwang S.-I."/>
            <person name="Rezaul K."/>
            <person name="Wu L."/>
            <person name="Eng J.K."/>
            <person name="Rodionov V."/>
            <person name="Han D.K."/>
        </authorList>
    </citation>
    <scope>PHOSPHORYLATION [LARGE SCALE ANALYSIS] AT SER-47</scope>
    <scope>IDENTIFICATION BY MASS SPECTROMETRY [LARGE SCALE ANALYSIS]</scope>
    <source>
        <tissue>Leukemic T-cell</tissue>
    </source>
</reference>
<reference key="14">
    <citation type="journal article" date="2010" name="Hematol. Oncol. Stem Cell Ther.">
        <title>Identification of a novel peptide derived from the M-phase phosphoprotein 11 (MPP11) leukemic antigen recognized by human CD8+ cytotoxic T lymphocytes.</title>
        <authorList>
            <person name="Al Qudaihi G."/>
            <person name="Lehe C."/>
            <person name="Dickinson A."/>
            <person name="Eltayeb K."/>
            <person name="Rasheed W."/>
            <person name="Chaudhri N."/>
            <person name="Aljurf M."/>
            <person name="Dermime S."/>
        </authorList>
    </citation>
    <scope>EPITOPE REGION</scope>
</reference>
<reference key="15">
    <citation type="journal article" date="2010" name="Nature">
        <title>Transcriptional activation of polycomb-repressed genes by ZRF1.</title>
        <authorList>
            <person name="Richly H."/>
            <person name="Rocha-Viegas L."/>
            <person name="Ribeiro J.D."/>
            <person name="Demajo S."/>
            <person name="Gundem G."/>
            <person name="Lopez-Bigas N."/>
            <person name="Nakagawa T."/>
            <person name="Rospert S."/>
            <person name="Ito T."/>
            <person name="Di Croce L."/>
        </authorList>
    </citation>
    <scope>FUNCTION AS CHROMATIN REGULATOR</scope>
    <scope>SUBCELLULAR LOCATION</scope>
    <scope>UBIQUITIN-BINDING</scope>
    <scope>DOMAIN ZRF1-UBD</scope>
</reference>
<reference key="16">
    <citation type="journal article" date="2010" name="Sci. Signal.">
        <title>Quantitative phosphoproteomics reveals widespread full phosphorylation site occupancy during mitosis.</title>
        <authorList>
            <person name="Olsen J.V."/>
            <person name="Vermeulen M."/>
            <person name="Santamaria A."/>
            <person name="Kumar C."/>
            <person name="Miller M.L."/>
            <person name="Jensen L.J."/>
            <person name="Gnad F."/>
            <person name="Cox J."/>
            <person name="Jensen T.S."/>
            <person name="Nigg E.A."/>
            <person name="Brunak S."/>
            <person name="Mann M."/>
        </authorList>
    </citation>
    <scope>PHOSPHORYLATION [LARGE SCALE ANALYSIS] AT SER-47 AND SER-49</scope>
    <scope>IDENTIFICATION BY MASS SPECTROMETRY [LARGE SCALE ANALYSIS]</scope>
    <source>
        <tissue>Cervix carcinoma</tissue>
    </source>
</reference>
<reference key="17">
    <citation type="journal article" date="2011" name="BMC Syst. Biol.">
        <title>Initial characterization of the human central proteome.</title>
        <authorList>
            <person name="Burkard T.R."/>
            <person name="Planyavsky M."/>
            <person name="Kaupe I."/>
            <person name="Breitwieser F.P."/>
            <person name="Buerckstuemmer T."/>
            <person name="Bennett K.L."/>
            <person name="Superti-Furga G."/>
            <person name="Colinge J."/>
        </authorList>
    </citation>
    <scope>IDENTIFICATION BY MASS SPECTROMETRY [LARGE SCALE ANALYSIS]</scope>
</reference>
<reference key="18">
    <citation type="journal article" date="2011" name="Sci. Signal.">
        <title>System-wide temporal characterization of the proteome and phosphoproteome of human embryonic stem cell differentiation.</title>
        <authorList>
            <person name="Rigbolt K.T."/>
            <person name="Prokhorova T.A."/>
            <person name="Akimov V."/>
            <person name="Henningsen J."/>
            <person name="Johansen P.T."/>
            <person name="Kratchmarova I."/>
            <person name="Kassem M."/>
            <person name="Mann M."/>
            <person name="Olsen J.V."/>
            <person name="Blagoev B."/>
        </authorList>
    </citation>
    <scope>PHOSPHORYLATION [LARGE SCALE ANALYSIS] AT SER-47 AND SER-49</scope>
    <scope>IDENTIFICATION BY MASS SPECTROMETRY [LARGE SCALE ANALYSIS]</scope>
</reference>
<reference key="19">
    <citation type="journal article" date="2012" name="Mol. Cell. Proteomics">
        <title>Comparative large-scale characterisation of plant vs. mammal proteins reveals similar and idiosyncratic N-alpha acetylation features.</title>
        <authorList>
            <person name="Bienvenut W.V."/>
            <person name="Sumpton D."/>
            <person name="Martinez A."/>
            <person name="Lilla S."/>
            <person name="Espagne C."/>
            <person name="Meinnel T."/>
            <person name="Giglione C."/>
        </authorList>
    </citation>
    <scope>ACETYLATION [LARGE SCALE ANALYSIS] AT MET-1</scope>
    <scope>IDENTIFICATION BY MASS SPECTROMETRY [LARGE SCALE ANALYSIS]</scope>
</reference>
<reference key="20">
    <citation type="journal article" date="2012" name="Proc. Natl. Acad. Sci. U.S.A.">
        <title>N-terminal acetylome analyses and functional insights of the N-terminal acetyltransferase NatB.</title>
        <authorList>
            <person name="Van Damme P."/>
            <person name="Lasa M."/>
            <person name="Polevoda B."/>
            <person name="Gazquez C."/>
            <person name="Elosegui-Artola A."/>
            <person name="Kim D.S."/>
            <person name="De Juan-Pardo E."/>
            <person name="Demeyer K."/>
            <person name="Hole K."/>
            <person name="Larrea E."/>
            <person name="Timmerman E."/>
            <person name="Prieto J."/>
            <person name="Arnesen T."/>
            <person name="Sherman F."/>
            <person name="Gevaert K."/>
            <person name="Aldabe R."/>
        </authorList>
    </citation>
    <scope>IDENTIFICATION BY MASS SPECTROMETRY [LARGE SCALE ANALYSIS]</scope>
</reference>
<reference key="21">
    <citation type="journal article" date="2013" name="J. Proteome Res.">
        <title>Toward a comprehensive characterization of a human cancer cell phosphoproteome.</title>
        <authorList>
            <person name="Zhou H."/>
            <person name="Di Palma S."/>
            <person name="Preisinger C."/>
            <person name="Peng M."/>
            <person name="Polat A.N."/>
            <person name="Heck A.J."/>
            <person name="Mohammed S."/>
        </authorList>
    </citation>
    <scope>PHOSPHORYLATION [LARGE SCALE ANALYSIS] AT SER-47 AND SER-49</scope>
    <scope>IDENTIFICATION BY MASS SPECTROMETRY [LARGE SCALE ANALYSIS]</scope>
    <source>
        <tissue>Cervix carcinoma</tissue>
        <tissue>Erythroleukemia</tissue>
    </source>
</reference>
<organism>
    <name type="scientific">Homo sapiens</name>
    <name type="common">Human</name>
    <dbReference type="NCBI Taxonomy" id="9606"/>
    <lineage>
        <taxon>Eukaryota</taxon>
        <taxon>Metazoa</taxon>
        <taxon>Chordata</taxon>
        <taxon>Craniata</taxon>
        <taxon>Vertebrata</taxon>
        <taxon>Euteleostomi</taxon>
        <taxon>Mammalia</taxon>
        <taxon>Eutheria</taxon>
        <taxon>Euarchontoglires</taxon>
        <taxon>Primates</taxon>
        <taxon>Haplorrhini</taxon>
        <taxon>Catarrhini</taxon>
        <taxon>Hominidae</taxon>
        <taxon>Homo</taxon>
    </lineage>
</organism>
<comment type="function">
    <text evidence="8 9 11">Acts both as a chaperone in the cytosol and as a chromatin regulator in the nucleus. When cytosolic, acts as a molecular chaperone: component of the ribosome-associated complex (RAC), a complex involved in folding or maintaining nascent polypeptides in a folding-competent state. In the RAC complex, stimulates the ATPase activity of the ribosome-associated pool of Hsp70-type chaperones HSPA14 that bind to the nascent polypeptide chain. When nuclear, mediates the switching from polycomb-repressed genes to an active state: specifically recruited at histone H2A ubiquitinated at 'Lys-119' (H2AK119ub), and promotes the displacement of the polycomb PRC1 complex from chromatin, thereby facilitating transcription activation.</text>
</comment>
<comment type="subunit">
    <text evidence="1 9">Component of ribosome-associated complex (RAC), a heterodimer composed of Hsp70/DnaK-type chaperone HSPA14 and Hsp40/DnaJ-type chaperone DNAJC2 (PubMed:16002468). Interacts (via ZRF1-UBD region) with ID1 (By similarity).</text>
</comment>
<comment type="interaction">
    <interactant intactId="EBI-11017224">
        <id>Q99543</id>
    </interactant>
    <interactant intactId="EBI-1390628">
        <id>P0C0S8</id>
        <label>H2AC17</label>
    </interactant>
    <organismsDiffer>false</organismsDiffer>
    <experiments>2</experiments>
</comment>
<comment type="interaction">
    <interactant intactId="EBI-11017224">
        <id>Q99543</id>
    </interactant>
    <interactant intactId="EBI-8773684">
        <id>Q0VDF9</id>
        <label>HSPA14</label>
    </interactant>
    <organismsDiffer>false</organismsDiffer>
    <experiments>4</experiments>
</comment>
<comment type="subcellular location">
    <subcellularLocation>
        <location evidence="11">Nucleus</location>
    </subcellularLocation>
    <subcellularLocation>
        <location evidence="9 11">Cytoplasm</location>
        <location evidence="9 11">Cytosol</location>
    </subcellularLocation>
</comment>
<comment type="alternative products">
    <event type="alternative splicing"/>
    <isoform>
        <id>Q99543-1</id>
        <name>1</name>
        <sequence type="displayed"/>
    </isoform>
    <isoform>
        <id>Q99543-2</id>
        <name>2</name>
        <sequence type="described" ref="VSP_023562"/>
    </isoform>
</comment>
<comment type="tissue specificity">
    <text evidence="5">Widely expressed.</text>
</comment>
<comment type="induction">
    <text evidence="6 7 10">Expression is repressed by CEBPA. Strongly overexpressed in leukemic cells.</text>
</comment>
<comment type="domain">
    <text evidence="11">The ZRF1-UBD region specifically recognizes and binds H2AK119ub. The ZRF1-UBD region is also involved in protein-protein interactions with other proteins, suggesting that it may be masked by some regulator, thereby preventing its association with H2AK119ub.</text>
</comment>
<comment type="PTM">
    <text evidence="12">Phosphorylated in M (mitotic) phase.</text>
</comment>
<comment type="miscellaneous">
    <text>Constitutes a myeloid leukemia-associated antigen and might be a target for leukemia T-cell therapy.</text>
</comment>
<comment type="sequence caution" evidence="15">
    <conflict type="erroneous initiation">
        <sequence resource="EMBL-CDS" id="AAI39752"/>
    </conflict>
    <text>Extended N-terminus.</text>
</comment>
<comment type="sequence caution" evidence="15">
    <conflict type="erroneous initiation">
        <sequence resource="EMBL-CDS" id="CAA66913"/>
    </conflict>
    <text>Extended N-terminus.</text>
</comment>
<dbReference type="EMBL" id="X98260">
    <property type="protein sequence ID" value="CAA66913.1"/>
    <property type="status" value="ALT_INIT"/>
    <property type="molecule type" value="mRNA"/>
</dbReference>
<dbReference type="EMBL" id="AC004668">
    <property type="status" value="NOT_ANNOTATED_CDS"/>
    <property type="molecule type" value="Genomic_DNA"/>
</dbReference>
<dbReference type="EMBL" id="BC000859">
    <property type="protein sequence ID" value="AAH00859.1"/>
    <property type="molecule type" value="mRNA"/>
</dbReference>
<dbReference type="EMBL" id="BC139751">
    <property type="protein sequence ID" value="AAI39752.1"/>
    <property type="status" value="ALT_INIT"/>
    <property type="molecule type" value="mRNA"/>
</dbReference>
<dbReference type="CCDS" id="CCDS43628.1">
    <molecule id="Q99543-1"/>
</dbReference>
<dbReference type="CCDS" id="CCDS47679.1">
    <molecule id="Q99543-2"/>
</dbReference>
<dbReference type="RefSeq" id="NP_001123359.1">
    <molecule id="Q99543-2"/>
    <property type="nucleotide sequence ID" value="NM_001129887.3"/>
</dbReference>
<dbReference type="RefSeq" id="NP_055192.1">
    <molecule id="Q99543-1"/>
    <property type="nucleotide sequence ID" value="NM_014377.3"/>
</dbReference>
<dbReference type="PDB" id="2M2E">
    <property type="method" value="NMR"/>
    <property type="chains" value="A=551-621"/>
</dbReference>
<dbReference type="PDB" id="6CGH">
    <property type="method" value="NMR"/>
    <property type="chains" value="A=346-432"/>
</dbReference>
<dbReference type="PDBsum" id="2M2E"/>
<dbReference type="PDBsum" id="6CGH"/>
<dbReference type="BMRB" id="Q99543"/>
<dbReference type="SMR" id="Q99543"/>
<dbReference type="BioGRID" id="117946">
    <property type="interactions" value="255"/>
</dbReference>
<dbReference type="ComplexPortal" id="CPX-2642">
    <property type="entry name" value="Ribosome-associated complex"/>
</dbReference>
<dbReference type="DIP" id="DIP-60462N"/>
<dbReference type="FunCoup" id="Q99543">
    <property type="interactions" value="4779"/>
</dbReference>
<dbReference type="IntAct" id="Q99543">
    <property type="interactions" value="107"/>
</dbReference>
<dbReference type="MINT" id="Q99543"/>
<dbReference type="STRING" id="9606.ENSP00000368565"/>
<dbReference type="GlyGen" id="Q99543">
    <property type="glycosylation" value="2 sites, 1 O-linked glycan (1 site)"/>
</dbReference>
<dbReference type="iPTMnet" id="Q99543"/>
<dbReference type="MetOSite" id="Q99543"/>
<dbReference type="PhosphoSitePlus" id="Q99543"/>
<dbReference type="SwissPalm" id="Q99543"/>
<dbReference type="BioMuta" id="DNAJC2"/>
<dbReference type="DMDM" id="296439472"/>
<dbReference type="jPOST" id="Q99543"/>
<dbReference type="MassIVE" id="Q99543"/>
<dbReference type="PaxDb" id="9606-ENSP00000368565"/>
<dbReference type="PeptideAtlas" id="Q99543"/>
<dbReference type="ProteomicsDB" id="78318">
    <molecule id="Q99543-1"/>
</dbReference>
<dbReference type="ProteomicsDB" id="78319">
    <molecule id="Q99543-2"/>
</dbReference>
<dbReference type="Pumba" id="Q99543"/>
<dbReference type="Antibodypedia" id="9291">
    <property type="antibodies" value="185 antibodies from 30 providers"/>
</dbReference>
<dbReference type="DNASU" id="27000"/>
<dbReference type="Ensembl" id="ENST00000249270.11">
    <molecule id="Q99543-2"/>
    <property type="protein sequence ID" value="ENSP00000249270.7"/>
    <property type="gene ID" value="ENSG00000105821.15"/>
</dbReference>
<dbReference type="Ensembl" id="ENST00000379263.8">
    <molecule id="Q99543-1"/>
    <property type="protein sequence ID" value="ENSP00000368565.3"/>
    <property type="gene ID" value="ENSG00000105821.15"/>
</dbReference>
<dbReference type="GeneID" id="27000"/>
<dbReference type="KEGG" id="hsa:27000"/>
<dbReference type="MANE-Select" id="ENST00000379263.8">
    <property type="protein sequence ID" value="ENSP00000368565.3"/>
    <property type="RefSeq nucleotide sequence ID" value="NM_014377.3"/>
    <property type="RefSeq protein sequence ID" value="NP_055192.1"/>
</dbReference>
<dbReference type="UCSC" id="uc003vbo.4">
    <molecule id="Q99543-1"/>
    <property type="organism name" value="human"/>
</dbReference>
<dbReference type="AGR" id="HGNC:13192"/>
<dbReference type="CTD" id="27000"/>
<dbReference type="DisGeNET" id="27000"/>
<dbReference type="GeneCards" id="DNAJC2"/>
<dbReference type="HGNC" id="HGNC:13192">
    <property type="gene designation" value="DNAJC2"/>
</dbReference>
<dbReference type="HPA" id="ENSG00000105821">
    <property type="expression patterns" value="Low tissue specificity"/>
</dbReference>
<dbReference type="MIM" id="605502">
    <property type="type" value="gene"/>
</dbReference>
<dbReference type="neXtProt" id="NX_Q99543"/>
<dbReference type="OpenTargets" id="ENSG00000105821"/>
<dbReference type="PharmGKB" id="PA162383835"/>
<dbReference type="VEuPathDB" id="HostDB:ENSG00000105821"/>
<dbReference type="eggNOG" id="KOG0724">
    <property type="taxonomic scope" value="Eukaryota"/>
</dbReference>
<dbReference type="GeneTree" id="ENSGT00940000155441"/>
<dbReference type="HOGENOM" id="CLU_019916_0_0_1"/>
<dbReference type="InParanoid" id="Q99543"/>
<dbReference type="OMA" id="SFWYDFD"/>
<dbReference type="OrthoDB" id="1690618at2759"/>
<dbReference type="PAN-GO" id="Q99543">
    <property type="GO annotations" value="4 GO annotations based on evolutionary models"/>
</dbReference>
<dbReference type="PhylomeDB" id="Q99543"/>
<dbReference type="TreeFam" id="TF105834"/>
<dbReference type="PathwayCommons" id="Q99543"/>
<dbReference type="Reactome" id="R-HSA-3371453">
    <property type="pathway name" value="Regulation of HSF1-mediated heat shock response"/>
</dbReference>
<dbReference type="SignaLink" id="Q99543"/>
<dbReference type="BioGRID-ORCS" id="27000">
    <property type="hits" value="95 hits in 1185 CRISPR screens"/>
</dbReference>
<dbReference type="ChiTaRS" id="DNAJC2">
    <property type="organism name" value="human"/>
</dbReference>
<dbReference type="EvolutionaryTrace" id="Q99543"/>
<dbReference type="GeneWiki" id="ZRF1"/>
<dbReference type="GenomeRNAi" id="27000"/>
<dbReference type="Pharos" id="Q99543">
    <property type="development level" value="Tbio"/>
</dbReference>
<dbReference type="PRO" id="PR:Q99543"/>
<dbReference type="Proteomes" id="UP000005640">
    <property type="component" value="Chromosome 7"/>
</dbReference>
<dbReference type="RNAct" id="Q99543">
    <property type="molecule type" value="protein"/>
</dbReference>
<dbReference type="Bgee" id="ENSG00000105821">
    <property type="expression patterns" value="Expressed in sural nerve and 209 other cell types or tissues"/>
</dbReference>
<dbReference type="ExpressionAtlas" id="Q99543">
    <property type="expression patterns" value="baseline and differential"/>
</dbReference>
<dbReference type="GO" id="GO:0005737">
    <property type="term" value="C:cytoplasm"/>
    <property type="evidence" value="ECO:0000314"/>
    <property type="project" value="UniProtKB"/>
</dbReference>
<dbReference type="GO" id="GO:0005829">
    <property type="term" value="C:cytosol"/>
    <property type="evidence" value="ECO:0000314"/>
    <property type="project" value="HPA"/>
</dbReference>
<dbReference type="GO" id="GO:0031965">
    <property type="term" value="C:nuclear membrane"/>
    <property type="evidence" value="ECO:0000314"/>
    <property type="project" value="HPA"/>
</dbReference>
<dbReference type="GO" id="GO:0005730">
    <property type="term" value="C:nucleolus"/>
    <property type="evidence" value="ECO:0000314"/>
    <property type="project" value="CACAO"/>
</dbReference>
<dbReference type="GO" id="GO:0005654">
    <property type="term" value="C:nucleoplasm"/>
    <property type="evidence" value="ECO:0000304"/>
    <property type="project" value="Reactome"/>
</dbReference>
<dbReference type="GO" id="GO:0005634">
    <property type="term" value="C:nucleus"/>
    <property type="evidence" value="ECO:0000314"/>
    <property type="project" value="UniProtKB"/>
</dbReference>
<dbReference type="GO" id="GO:0001671">
    <property type="term" value="F:ATPase activator activity"/>
    <property type="evidence" value="ECO:0000304"/>
    <property type="project" value="Reactome"/>
</dbReference>
<dbReference type="GO" id="GO:0003682">
    <property type="term" value="F:chromatin binding"/>
    <property type="evidence" value="ECO:0000314"/>
    <property type="project" value="UniProtKB"/>
</dbReference>
<dbReference type="GO" id="GO:0042393">
    <property type="term" value="F:histone binding"/>
    <property type="evidence" value="ECO:0000314"/>
    <property type="project" value="UniProtKB"/>
</dbReference>
<dbReference type="GO" id="GO:0030544">
    <property type="term" value="F:Hsp70 protein binding"/>
    <property type="evidence" value="ECO:0000353"/>
    <property type="project" value="UniProtKB"/>
</dbReference>
<dbReference type="GO" id="GO:0043022">
    <property type="term" value="F:ribosome binding"/>
    <property type="evidence" value="ECO:0000318"/>
    <property type="project" value="GO_Central"/>
</dbReference>
<dbReference type="GO" id="GO:0003723">
    <property type="term" value="F:RNA binding"/>
    <property type="evidence" value="ECO:0007005"/>
    <property type="project" value="UniProtKB"/>
</dbReference>
<dbReference type="GO" id="GO:0061649">
    <property type="term" value="F:ubiquitin-modified histone reader activity"/>
    <property type="evidence" value="ECO:0000314"/>
    <property type="project" value="UniProtKB"/>
</dbReference>
<dbReference type="GO" id="GO:0051083">
    <property type="term" value="P:'de novo' cotranslational protein folding"/>
    <property type="evidence" value="ECO:0000318"/>
    <property type="project" value="GO_Central"/>
</dbReference>
<dbReference type="GO" id="GO:0006260">
    <property type="term" value="P:DNA replication"/>
    <property type="evidence" value="ECO:0007669"/>
    <property type="project" value="Ensembl"/>
</dbReference>
<dbReference type="GO" id="GO:2000279">
    <property type="term" value="P:negative regulation of DNA biosynthetic process"/>
    <property type="evidence" value="ECO:0007669"/>
    <property type="project" value="Ensembl"/>
</dbReference>
<dbReference type="GO" id="GO:0045893">
    <property type="term" value="P:positive regulation of DNA-templated transcription"/>
    <property type="evidence" value="ECO:0000314"/>
    <property type="project" value="UniProtKB"/>
</dbReference>
<dbReference type="GO" id="GO:1900034">
    <property type="term" value="P:regulation of cellular response to heat"/>
    <property type="evidence" value="ECO:0000304"/>
    <property type="project" value="Reactome"/>
</dbReference>
<dbReference type="GO" id="GO:0006450">
    <property type="term" value="P:regulation of translational fidelity"/>
    <property type="evidence" value="ECO:0007669"/>
    <property type="project" value="InterPro"/>
</dbReference>
<dbReference type="CDD" id="cd06257">
    <property type="entry name" value="DnaJ"/>
    <property type="match status" value="1"/>
</dbReference>
<dbReference type="CDD" id="cd00167">
    <property type="entry name" value="SANT"/>
    <property type="match status" value="2"/>
</dbReference>
<dbReference type="CDD" id="cd23953">
    <property type="entry name" value="zuotin_NTD"/>
    <property type="match status" value="1"/>
</dbReference>
<dbReference type="FunFam" id="1.10.10.60:FF:000180">
    <property type="entry name" value="DnaJ (Hsp40) homolog, subfamily C, member 2"/>
    <property type="match status" value="1"/>
</dbReference>
<dbReference type="FunFam" id="1.10.287.110:FF:000024">
    <property type="entry name" value="DnaJ (Hsp40) homolog, subfamily C, member 2"/>
    <property type="match status" value="1"/>
</dbReference>
<dbReference type="FunFam" id="1.10.10.60:FF:000215">
    <property type="entry name" value="dnaJ homolog subfamily C member 2 isoform X1"/>
    <property type="match status" value="1"/>
</dbReference>
<dbReference type="FunFam" id="1.10.8.840:FF:000001">
    <property type="entry name" value="dnaJ homolog subfamily C member 2 isoform X1"/>
    <property type="match status" value="1"/>
</dbReference>
<dbReference type="Gene3D" id="1.10.287.110">
    <property type="entry name" value="DnaJ domain"/>
    <property type="match status" value="1"/>
</dbReference>
<dbReference type="Gene3D" id="1.10.10.60">
    <property type="entry name" value="Homeodomain-like"/>
    <property type="match status" value="2"/>
</dbReference>
<dbReference type="Gene3D" id="1.10.8.840">
    <property type="entry name" value="Ribosome-associated complex head domain"/>
    <property type="match status" value="1"/>
</dbReference>
<dbReference type="InterPro" id="IPR001623">
    <property type="entry name" value="DnaJ_domain"/>
</dbReference>
<dbReference type="InterPro" id="IPR018253">
    <property type="entry name" value="DnaJ_domain_CS"/>
</dbReference>
<dbReference type="InterPro" id="IPR009057">
    <property type="entry name" value="Homeodomain-like_sf"/>
</dbReference>
<dbReference type="InterPro" id="IPR036869">
    <property type="entry name" value="J_dom_sf"/>
</dbReference>
<dbReference type="InterPro" id="IPR017930">
    <property type="entry name" value="Myb_dom"/>
</dbReference>
<dbReference type="InterPro" id="IPR032003">
    <property type="entry name" value="RAC_head"/>
</dbReference>
<dbReference type="InterPro" id="IPR042569">
    <property type="entry name" value="RAC_head_sf"/>
</dbReference>
<dbReference type="InterPro" id="IPR001005">
    <property type="entry name" value="SANT/Myb"/>
</dbReference>
<dbReference type="InterPro" id="IPR017884">
    <property type="entry name" value="SANT_dom"/>
</dbReference>
<dbReference type="InterPro" id="IPR054076">
    <property type="entry name" value="ZUO1-like_ZHD"/>
</dbReference>
<dbReference type="InterPro" id="IPR044634">
    <property type="entry name" value="Zuotin/DnaJC2"/>
</dbReference>
<dbReference type="PANTHER" id="PTHR43999">
    <property type="entry name" value="DNAJ HOMOLOG SUBFAMILY C MEMBER 2"/>
    <property type="match status" value="1"/>
</dbReference>
<dbReference type="PANTHER" id="PTHR43999:SF1">
    <property type="entry name" value="DNAJ HOMOLOG SUBFAMILY C MEMBER 2"/>
    <property type="match status" value="1"/>
</dbReference>
<dbReference type="Pfam" id="PF00226">
    <property type="entry name" value="DnaJ"/>
    <property type="match status" value="1"/>
</dbReference>
<dbReference type="Pfam" id="PF00249">
    <property type="entry name" value="Myb_DNA-binding"/>
    <property type="match status" value="1"/>
</dbReference>
<dbReference type="Pfam" id="PF16717">
    <property type="entry name" value="RAC_head"/>
    <property type="match status" value="1"/>
</dbReference>
<dbReference type="Pfam" id="PF21884">
    <property type="entry name" value="ZUO1-like_ZHD"/>
    <property type="match status" value="1"/>
</dbReference>
<dbReference type="SMART" id="SM00271">
    <property type="entry name" value="DnaJ"/>
    <property type="match status" value="1"/>
</dbReference>
<dbReference type="SMART" id="SM00717">
    <property type="entry name" value="SANT"/>
    <property type="match status" value="2"/>
</dbReference>
<dbReference type="SUPFAM" id="SSF46565">
    <property type="entry name" value="Chaperone J-domain"/>
    <property type="match status" value="1"/>
</dbReference>
<dbReference type="SUPFAM" id="SSF46689">
    <property type="entry name" value="Homeodomain-like"/>
    <property type="match status" value="2"/>
</dbReference>
<dbReference type="PROSITE" id="PS00636">
    <property type="entry name" value="DNAJ_1"/>
    <property type="match status" value="1"/>
</dbReference>
<dbReference type="PROSITE" id="PS50076">
    <property type="entry name" value="DNAJ_2"/>
    <property type="match status" value="1"/>
</dbReference>
<dbReference type="PROSITE" id="PS51293">
    <property type="entry name" value="SANT"/>
    <property type="match status" value="2"/>
</dbReference>
<name>DNJC2_HUMAN</name>